<proteinExistence type="evidence at transcript level"/>
<protein>
    <recommendedName>
        <fullName>General odorant-binding protein 1</fullName>
        <shortName>GOBP 1</shortName>
    </recommendedName>
</protein>
<dbReference type="EMBL" id="X96862">
    <property type="protein sequence ID" value="CAA65605.1"/>
    <property type="molecule type" value="mRNA"/>
</dbReference>
<dbReference type="PIR" id="C56584">
    <property type="entry name" value="C56584"/>
</dbReference>
<dbReference type="SMR" id="Q27226"/>
<dbReference type="GO" id="GO:0005549">
    <property type="term" value="F:odorant binding"/>
    <property type="evidence" value="ECO:0007669"/>
    <property type="project" value="InterPro"/>
</dbReference>
<dbReference type="GO" id="GO:0007608">
    <property type="term" value="P:sensory perception of smell"/>
    <property type="evidence" value="ECO:0007669"/>
    <property type="project" value="UniProtKB-KW"/>
</dbReference>
<dbReference type="CDD" id="cd23992">
    <property type="entry name" value="PBP_GOBP"/>
    <property type="match status" value="1"/>
</dbReference>
<dbReference type="Gene3D" id="1.10.238.20">
    <property type="entry name" value="Pheromone/general odorant binding protein domain"/>
    <property type="match status" value="1"/>
</dbReference>
<dbReference type="InterPro" id="IPR006072">
    <property type="entry name" value="Odorant/phero-bd_Lep"/>
</dbReference>
<dbReference type="InterPro" id="IPR006170">
    <property type="entry name" value="PBP/GOBP"/>
</dbReference>
<dbReference type="InterPro" id="IPR036728">
    <property type="entry name" value="PBP_GOBP_sf"/>
</dbReference>
<dbReference type="Pfam" id="PF01395">
    <property type="entry name" value="PBP_GOBP"/>
    <property type="match status" value="1"/>
</dbReference>
<dbReference type="PIRSF" id="PIRSF015604">
    <property type="entry name" value="Odorant/phero_bd"/>
    <property type="match status" value="1"/>
</dbReference>
<dbReference type="PRINTS" id="PR00484">
    <property type="entry name" value="PBPGOBP"/>
</dbReference>
<dbReference type="SMART" id="SM00708">
    <property type="entry name" value="PhBP"/>
    <property type="match status" value="1"/>
</dbReference>
<dbReference type="SUPFAM" id="SSF47565">
    <property type="entry name" value="Insect pheromone/odorant-binding proteins"/>
    <property type="match status" value="1"/>
</dbReference>
<evidence type="ECO:0000250" key="1"/>
<evidence type="ECO:0000255" key="2"/>
<evidence type="ECO:0000305" key="3"/>
<accession>Q27226</accession>
<name>OBP1_HELVI</name>
<sequence length="164" mass="19040">MPGVLRALLLLAAAAPLLADVNVMKDVTLGFGQALDKCREESQLTEEKMEEFFHFWRDDFKFEHRELGCAIQCMSRHFNLLTDSSRMHHDNTEKFIQSFPNGEVLARQMVELIHSCEKQFDHEEDHCWRISHLADCFKSSCVQRGIAPSMELMMTEFIMEAEAR</sequence>
<keyword id="KW-1015">Disulfide bond</keyword>
<keyword id="KW-0552">Olfaction</keyword>
<keyword id="KW-0716">Sensory transduction</keyword>
<keyword id="KW-0732">Signal</keyword>
<keyword id="KW-0813">Transport</keyword>
<feature type="signal peptide" evidence="2">
    <location>
        <begin position="1"/>
        <end position="19"/>
    </location>
</feature>
<feature type="chain" id="PRO_0000012582" description="General odorant-binding protein 1">
    <location>
        <begin position="20"/>
        <end position="164"/>
    </location>
</feature>
<feature type="disulfide bond" evidence="1">
    <location>
        <begin position="38"/>
        <end position="73"/>
    </location>
</feature>
<feature type="disulfide bond" evidence="1">
    <location>
        <begin position="69"/>
        <end position="127"/>
    </location>
</feature>
<feature type="disulfide bond" evidence="1">
    <location>
        <begin position="116"/>
        <end position="136"/>
    </location>
</feature>
<comment type="function">
    <text evidence="1">Present in the aqueous fluid surrounding olfactory sensory dendrites and are thought to aid in the capture and transport of hydrophobic odorants into and through this fluid.</text>
</comment>
<comment type="tissue specificity">
    <text>Antenna.</text>
</comment>
<comment type="similarity">
    <text evidence="3">Belongs to the PBP/GOBP family.</text>
</comment>
<organism>
    <name type="scientific">Heliothis virescens</name>
    <name type="common">Tobacco budworm moth</name>
    <dbReference type="NCBI Taxonomy" id="7102"/>
    <lineage>
        <taxon>Eukaryota</taxon>
        <taxon>Metazoa</taxon>
        <taxon>Ecdysozoa</taxon>
        <taxon>Arthropoda</taxon>
        <taxon>Hexapoda</taxon>
        <taxon>Insecta</taxon>
        <taxon>Pterygota</taxon>
        <taxon>Neoptera</taxon>
        <taxon>Endopterygota</taxon>
        <taxon>Lepidoptera</taxon>
        <taxon>Glossata</taxon>
        <taxon>Ditrysia</taxon>
        <taxon>Noctuoidea</taxon>
        <taxon>Noctuidae</taxon>
        <taxon>Heliothinae</taxon>
        <taxon>Heliothis</taxon>
    </lineage>
</organism>
<reference key="1">
    <citation type="journal article" date="1993" name="Insect Biochem. Mol. Biol.">
        <title>Odorant binding proteins of Heliothis virescens.</title>
        <authorList>
            <person name="Krieger J."/>
            <person name="Ganssle H."/>
            <person name="Raming K."/>
            <person name="Breer H."/>
        </authorList>
    </citation>
    <scope>NUCLEOTIDE SEQUENCE [MRNA]</scope>
    <source>
        <tissue>Antenna</tissue>
    </source>
</reference>